<dbReference type="EC" id="6.5.1.2" evidence="1"/>
<dbReference type="EMBL" id="FM209186">
    <property type="protein sequence ID" value="CAW28526.1"/>
    <property type="molecule type" value="Genomic_DNA"/>
</dbReference>
<dbReference type="RefSeq" id="WP_003114675.1">
    <property type="nucleotide sequence ID" value="NC_011770.1"/>
</dbReference>
<dbReference type="SMR" id="B7UVJ3"/>
<dbReference type="KEGG" id="pag:PLES_37991"/>
<dbReference type="HOGENOM" id="CLU_007764_2_1_6"/>
<dbReference type="GO" id="GO:0005829">
    <property type="term" value="C:cytosol"/>
    <property type="evidence" value="ECO:0007669"/>
    <property type="project" value="TreeGrafter"/>
</dbReference>
<dbReference type="GO" id="GO:0003911">
    <property type="term" value="F:DNA ligase (NAD+) activity"/>
    <property type="evidence" value="ECO:0007669"/>
    <property type="project" value="UniProtKB-UniRule"/>
</dbReference>
<dbReference type="GO" id="GO:0046872">
    <property type="term" value="F:metal ion binding"/>
    <property type="evidence" value="ECO:0007669"/>
    <property type="project" value="UniProtKB-KW"/>
</dbReference>
<dbReference type="GO" id="GO:0006281">
    <property type="term" value="P:DNA repair"/>
    <property type="evidence" value="ECO:0007669"/>
    <property type="project" value="UniProtKB-KW"/>
</dbReference>
<dbReference type="GO" id="GO:0006260">
    <property type="term" value="P:DNA replication"/>
    <property type="evidence" value="ECO:0007669"/>
    <property type="project" value="UniProtKB-KW"/>
</dbReference>
<dbReference type="CDD" id="cd17748">
    <property type="entry name" value="BRCT_DNA_ligase_like"/>
    <property type="match status" value="1"/>
</dbReference>
<dbReference type="CDD" id="cd00114">
    <property type="entry name" value="LIGANc"/>
    <property type="match status" value="1"/>
</dbReference>
<dbReference type="FunFam" id="1.10.150.20:FF:000006">
    <property type="entry name" value="DNA ligase"/>
    <property type="match status" value="1"/>
</dbReference>
<dbReference type="FunFam" id="1.10.150.20:FF:000007">
    <property type="entry name" value="DNA ligase"/>
    <property type="match status" value="1"/>
</dbReference>
<dbReference type="FunFam" id="1.10.287.610:FF:000002">
    <property type="entry name" value="DNA ligase"/>
    <property type="match status" value="1"/>
</dbReference>
<dbReference type="FunFam" id="2.40.50.140:FF:000012">
    <property type="entry name" value="DNA ligase"/>
    <property type="match status" value="1"/>
</dbReference>
<dbReference type="FunFam" id="3.30.470.30:FF:000001">
    <property type="entry name" value="DNA ligase"/>
    <property type="match status" value="1"/>
</dbReference>
<dbReference type="FunFam" id="3.40.50.10190:FF:000069">
    <property type="entry name" value="DNA ligase"/>
    <property type="match status" value="1"/>
</dbReference>
<dbReference type="Gene3D" id="6.20.10.30">
    <property type="match status" value="1"/>
</dbReference>
<dbReference type="Gene3D" id="1.10.150.20">
    <property type="entry name" value="5' to 3' exonuclease, C-terminal subdomain"/>
    <property type="match status" value="3"/>
</dbReference>
<dbReference type="Gene3D" id="3.40.50.10190">
    <property type="entry name" value="BRCT domain"/>
    <property type="match status" value="1"/>
</dbReference>
<dbReference type="Gene3D" id="3.30.470.30">
    <property type="entry name" value="DNA ligase/mRNA capping enzyme"/>
    <property type="match status" value="1"/>
</dbReference>
<dbReference type="Gene3D" id="1.10.287.610">
    <property type="entry name" value="Helix hairpin bin"/>
    <property type="match status" value="1"/>
</dbReference>
<dbReference type="Gene3D" id="2.40.50.140">
    <property type="entry name" value="Nucleic acid-binding proteins"/>
    <property type="match status" value="1"/>
</dbReference>
<dbReference type="HAMAP" id="MF_01588">
    <property type="entry name" value="DNA_ligase_A"/>
    <property type="match status" value="1"/>
</dbReference>
<dbReference type="InterPro" id="IPR001357">
    <property type="entry name" value="BRCT_dom"/>
</dbReference>
<dbReference type="InterPro" id="IPR036420">
    <property type="entry name" value="BRCT_dom_sf"/>
</dbReference>
<dbReference type="InterPro" id="IPR041663">
    <property type="entry name" value="DisA/LigA_HHH"/>
</dbReference>
<dbReference type="InterPro" id="IPR001679">
    <property type="entry name" value="DNA_ligase"/>
</dbReference>
<dbReference type="InterPro" id="IPR018239">
    <property type="entry name" value="DNA_ligase_AS"/>
</dbReference>
<dbReference type="InterPro" id="IPR033136">
    <property type="entry name" value="DNA_ligase_CS"/>
</dbReference>
<dbReference type="InterPro" id="IPR013839">
    <property type="entry name" value="DNAligase_adenylation"/>
</dbReference>
<dbReference type="InterPro" id="IPR013840">
    <property type="entry name" value="DNAligase_N"/>
</dbReference>
<dbReference type="InterPro" id="IPR012340">
    <property type="entry name" value="NA-bd_OB-fold"/>
</dbReference>
<dbReference type="InterPro" id="IPR004150">
    <property type="entry name" value="NAD_DNA_ligase_OB"/>
</dbReference>
<dbReference type="InterPro" id="IPR010994">
    <property type="entry name" value="RuvA_2-like"/>
</dbReference>
<dbReference type="InterPro" id="IPR004149">
    <property type="entry name" value="Znf_DNAligase_C4"/>
</dbReference>
<dbReference type="NCBIfam" id="TIGR00575">
    <property type="entry name" value="dnlj"/>
    <property type="match status" value="1"/>
</dbReference>
<dbReference type="NCBIfam" id="NF005932">
    <property type="entry name" value="PRK07956.1"/>
    <property type="match status" value="1"/>
</dbReference>
<dbReference type="PANTHER" id="PTHR23389">
    <property type="entry name" value="CHROMOSOME TRANSMISSION FIDELITY FACTOR 18"/>
    <property type="match status" value="1"/>
</dbReference>
<dbReference type="PANTHER" id="PTHR23389:SF9">
    <property type="entry name" value="DNA LIGASE"/>
    <property type="match status" value="1"/>
</dbReference>
<dbReference type="Pfam" id="PF00533">
    <property type="entry name" value="BRCT"/>
    <property type="match status" value="1"/>
</dbReference>
<dbReference type="Pfam" id="PF01653">
    <property type="entry name" value="DNA_ligase_aden"/>
    <property type="match status" value="1"/>
</dbReference>
<dbReference type="Pfam" id="PF03120">
    <property type="entry name" value="DNA_ligase_OB"/>
    <property type="match status" value="1"/>
</dbReference>
<dbReference type="Pfam" id="PF03119">
    <property type="entry name" value="DNA_ligase_ZBD"/>
    <property type="match status" value="1"/>
</dbReference>
<dbReference type="Pfam" id="PF12826">
    <property type="entry name" value="HHH_2"/>
    <property type="match status" value="2"/>
</dbReference>
<dbReference type="Pfam" id="PF22745">
    <property type="entry name" value="Nlig-Ia"/>
    <property type="match status" value="1"/>
</dbReference>
<dbReference type="PIRSF" id="PIRSF001604">
    <property type="entry name" value="LigA"/>
    <property type="match status" value="1"/>
</dbReference>
<dbReference type="SMART" id="SM00292">
    <property type="entry name" value="BRCT"/>
    <property type="match status" value="1"/>
</dbReference>
<dbReference type="SMART" id="SM00532">
    <property type="entry name" value="LIGANc"/>
    <property type="match status" value="1"/>
</dbReference>
<dbReference type="SUPFAM" id="SSF52113">
    <property type="entry name" value="BRCT domain"/>
    <property type="match status" value="1"/>
</dbReference>
<dbReference type="SUPFAM" id="SSF56091">
    <property type="entry name" value="DNA ligase/mRNA capping enzyme, catalytic domain"/>
    <property type="match status" value="1"/>
</dbReference>
<dbReference type="SUPFAM" id="SSF50249">
    <property type="entry name" value="Nucleic acid-binding proteins"/>
    <property type="match status" value="1"/>
</dbReference>
<dbReference type="SUPFAM" id="SSF47781">
    <property type="entry name" value="RuvA domain 2-like"/>
    <property type="match status" value="2"/>
</dbReference>
<dbReference type="PROSITE" id="PS50172">
    <property type="entry name" value="BRCT"/>
    <property type="match status" value="1"/>
</dbReference>
<dbReference type="PROSITE" id="PS01055">
    <property type="entry name" value="DNA_LIGASE_N1"/>
    <property type="match status" value="1"/>
</dbReference>
<dbReference type="PROSITE" id="PS01056">
    <property type="entry name" value="DNA_LIGASE_N2"/>
    <property type="match status" value="1"/>
</dbReference>
<name>DNLJ_PSEA8</name>
<keyword id="KW-0227">DNA damage</keyword>
<keyword id="KW-0234">DNA repair</keyword>
<keyword id="KW-0235">DNA replication</keyword>
<keyword id="KW-0436">Ligase</keyword>
<keyword id="KW-0460">Magnesium</keyword>
<keyword id="KW-0464">Manganese</keyword>
<keyword id="KW-0479">Metal-binding</keyword>
<keyword id="KW-0520">NAD</keyword>
<keyword id="KW-0862">Zinc</keyword>
<reference key="1">
    <citation type="journal article" date="2009" name="Genome Res.">
        <title>Newly introduced genomic prophage islands are critical determinants of in vivo competitiveness in the Liverpool epidemic strain of Pseudomonas aeruginosa.</title>
        <authorList>
            <person name="Winstanley C."/>
            <person name="Langille M.G.I."/>
            <person name="Fothergill J.L."/>
            <person name="Kukavica-Ibrulj I."/>
            <person name="Paradis-Bleau C."/>
            <person name="Sanschagrin F."/>
            <person name="Thomson N.R."/>
            <person name="Winsor G.L."/>
            <person name="Quail M.A."/>
            <person name="Lennard N."/>
            <person name="Bignell A."/>
            <person name="Clarke L."/>
            <person name="Seeger K."/>
            <person name="Saunders D."/>
            <person name="Harris D."/>
            <person name="Parkhill J."/>
            <person name="Hancock R.E.W."/>
            <person name="Brinkman F.S.L."/>
            <person name="Levesque R.C."/>
        </authorList>
    </citation>
    <scope>NUCLEOTIDE SEQUENCE [LARGE SCALE GENOMIC DNA]</scope>
    <source>
        <strain>LESB58</strain>
    </source>
</reference>
<proteinExistence type="inferred from homology"/>
<protein>
    <recommendedName>
        <fullName evidence="1">DNA ligase</fullName>
        <ecNumber evidence="1">6.5.1.2</ecNumber>
    </recommendedName>
    <alternativeName>
        <fullName evidence="1">Polydeoxyribonucleotide synthase [NAD(+)]</fullName>
    </alternativeName>
</protein>
<evidence type="ECO:0000255" key="1">
    <source>
        <dbReference type="HAMAP-Rule" id="MF_01588"/>
    </source>
</evidence>
<accession>B7UVJ3</accession>
<gene>
    <name evidence="1" type="primary">ligA</name>
    <name type="ordered locus">PLES_37991</name>
</gene>
<organism>
    <name type="scientific">Pseudomonas aeruginosa (strain LESB58)</name>
    <dbReference type="NCBI Taxonomy" id="557722"/>
    <lineage>
        <taxon>Bacteria</taxon>
        <taxon>Pseudomonadati</taxon>
        <taxon>Pseudomonadota</taxon>
        <taxon>Gammaproteobacteria</taxon>
        <taxon>Pseudomonadales</taxon>
        <taxon>Pseudomonadaceae</taxon>
        <taxon>Pseudomonas</taxon>
    </lineage>
</organism>
<feature type="chain" id="PRO_0000380447" description="DNA ligase">
    <location>
        <begin position="1"/>
        <end position="794"/>
    </location>
</feature>
<feature type="domain" description="BRCT" evidence="1">
    <location>
        <begin position="711"/>
        <end position="794"/>
    </location>
</feature>
<feature type="active site" description="N6-AMP-lysine intermediate" evidence="1">
    <location>
        <position position="128"/>
    </location>
</feature>
<feature type="binding site" evidence="1">
    <location>
        <begin position="35"/>
        <end position="39"/>
    </location>
    <ligand>
        <name>NAD(+)</name>
        <dbReference type="ChEBI" id="CHEBI:57540"/>
    </ligand>
</feature>
<feature type="binding site" evidence="1">
    <location>
        <begin position="84"/>
        <end position="85"/>
    </location>
    <ligand>
        <name>NAD(+)</name>
        <dbReference type="ChEBI" id="CHEBI:57540"/>
    </ligand>
</feature>
<feature type="binding site" evidence="1">
    <location>
        <position position="126"/>
    </location>
    <ligand>
        <name>NAD(+)</name>
        <dbReference type="ChEBI" id="CHEBI:57540"/>
    </ligand>
</feature>
<feature type="binding site" evidence="1">
    <location>
        <position position="149"/>
    </location>
    <ligand>
        <name>NAD(+)</name>
        <dbReference type="ChEBI" id="CHEBI:57540"/>
    </ligand>
</feature>
<feature type="binding site" evidence="1">
    <location>
        <position position="186"/>
    </location>
    <ligand>
        <name>NAD(+)</name>
        <dbReference type="ChEBI" id="CHEBI:57540"/>
    </ligand>
</feature>
<feature type="binding site" evidence="1">
    <location>
        <position position="302"/>
    </location>
    <ligand>
        <name>NAD(+)</name>
        <dbReference type="ChEBI" id="CHEBI:57540"/>
    </ligand>
</feature>
<feature type="binding site" evidence="1">
    <location>
        <position position="326"/>
    </location>
    <ligand>
        <name>NAD(+)</name>
        <dbReference type="ChEBI" id="CHEBI:57540"/>
    </ligand>
</feature>
<feature type="binding site" evidence="1">
    <location>
        <position position="420"/>
    </location>
    <ligand>
        <name>Zn(2+)</name>
        <dbReference type="ChEBI" id="CHEBI:29105"/>
    </ligand>
</feature>
<feature type="binding site" evidence="1">
    <location>
        <position position="423"/>
    </location>
    <ligand>
        <name>Zn(2+)</name>
        <dbReference type="ChEBI" id="CHEBI:29105"/>
    </ligand>
</feature>
<feature type="binding site" evidence="1">
    <location>
        <position position="450"/>
    </location>
    <ligand>
        <name>Zn(2+)</name>
        <dbReference type="ChEBI" id="CHEBI:29105"/>
    </ligand>
</feature>
<feature type="binding site" evidence="1">
    <location>
        <position position="456"/>
    </location>
    <ligand>
        <name>Zn(2+)</name>
        <dbReference type="ChEBI" id="CHEBI:29105"/>
    </ligand>
</feature>
<sequence length="794" mass="86768">MTDTQAAAERIAQLRTELDTHNYRYYVLDEPSIPDAEYDRLFRELQALEAEYPQLLTPDSPTQRVSGTPASAFGEVRHEIPMLSLGNAFEEQDLLDFDRRVREGLADLLPGGDLLGGGAEVEYSCEPKLDGLAVSLLYERGQLVRGATRGDGSTGEDITSNVRTIRNVPLKLHGEGWPEILEVRGEVFMSKAGFEALNAKAVETGGKTFANPRNAAAGSLRQLDSKITASRPLEFCAYGFGQVSGTLPDTQVGILEAFRGWGIPISRELRLVKGAQACRDYYDDIGRRRDALAYEIDGVVFKVNRIAFQRELGFRAREPRWAIAHKFPAREELTELLGVEFQVGRTGAVTPVARLKPVQVAGVTVSNATLHNMDEVARLGLRIGDTVVIRRAGDVIPQVMQVVLERRPADAQAIEVPEHCPVCGSAVERTQLVKRSKGKESISEGAIYRCVGRLSCQAQLKQAIIHFVSRRAMDIDGLGDKIVEQLVDRGLVASPADLYTLTYEQVFELEGFAELSTNNLLTAIADSRKPSLARFIFALGIPDVGEETAKLLARSLGSLERIGKALPEVLTYLPDVGAEVAYEIHNFFADEHNRQVIAQLRDAEHGVQLQEEGEVAAEFAACASLAGFIDKLNIPFIAATGAEKLASRFGSLDGIIRADWLDLRQVERLPERAAKSLRDFFDEPANVQRALAIEAQLREFGMHWQSERKAVEGLPLAGQTWVLTGTLEAMSRDVAKDKLEGLGAKVAGSVSAKTHCVVAGPGAGSKLAKANELGVKVLDEDGLLKLFDEHGVAR</sequence>
<comment type="function">
    <text evidence="1">DNA ligase that catalyzes the formation of phosphodiester linkages between 5'-phosphoryl and 3'-hydroxyl groups in double-stranded DNA using NAD as a coenzyme and as the energy source for the reaction. It is essential for DNA replication and repair of damaged DNA.</text>
</comment>
<comment type="catalytic activity">
    <reaction evidence="1">
        <text>NAD(+) + (deoxyribonucleotide)n-3'-hydroxyl + 5'-phospho-(deoxyribonucleotide)m = (deoxyribonucleotide)n+m + AMP + beta-nicotinamide D-nucleotide.</text>
        <dbReference type="EC" id="6.5.1.2"/>
    </reaction>
</comment>
<comment type="cofactor">
    <cofactor evidence="1">
        <name>Mg(2+)</name>
        <dbReference type="ChEBI" id="CHEBI:18420"/>
    </cofactor>
    <cofactor evidence="1">
        <name>Mn(2+)</name>
        <dbReference type="ChEBI" id="CHEBI:29035"/>
    </cofactor>
</comment>
<comment type="similarity">
    <text evidence="1">Belongs to the NAD-dependent DNA ligase family. LigA subfamily.</text>
</comment>